<name>MOAR_KLEAE</name>
<keyword id="KW-0010">Activator</keyword>
<keyword id="KW-0238">DNA-binding</keyword>
<keyword id="KW-0804">Transcription</keyword>
<keyword id="KW-0805">Transcription regulation</keyword>
<feature type="chain" id="PRO_0000184174" description="Monoamine regulon transcriptional regulator">
    <location>
        <begin position="1"/>
        <end position="227"/>
    </location>
</feature>
<feature type="domain" description="HTH luxR-type" evidence="1">
    <location>
        <begin position="155"/>
        <end position="220"/>
    </location>
</feature>
<feature type="DNA-binding region" description="H-T-H motif" evidence="1">
    <location>
        <begin position="179"/>
        <end position="198"/>
    </location>
</feature>
<organism>
    <name type="scientific">Klebsiella aerogenes</name>
    <name type="common">Enterobacter aerogenes</name>
    <dbReference type="NCBI Taxonomy" id="548"/>
    <lineage>
        <taxon>Bacteria</taxon>
        <taxon>Pseudomonadati</taxon>
        <taxon>Pseudomonadota</taxon>
        <taxon>Gammaproteobacteria</taxon>
        <taxon>Enterobacterales</taxon>
        <taxon>Enterobacteriaceae</taxon>
        <taxon>Klebsiella/Raoultella group</taxon>
        <taxon>Klebsiella</taxon>
    </lineage>
</organism>
<gene>
    <name type="primary">moaR</name>
</gene>
<dbReference type="EMBL" id="D15072">
    <property type="protein sequence ID" value="BAA03667.1"/>
    <property type="molecule type" value="Genomic_DNA"/>
</dbReference>
<dbReference type="SMR" id="P54794"/>
<dbReference type="STRING" id="548.EAG7_02822"/>
<dbReference type="GO" id="GO:0003677">
    <property type="term" value="F:DNA binding"/>
    <property type="evidence" value="ECO:0007669"/>
    <property type="project" value="UniProtKB-KW"/>
</dbReference>
<dbReference type="GO" id="GO:0006355">
    <property type="term" value="P:regulation of DNA-templated transcription"/>
    <property type="evidence" value="ECO:0007669"/>
    <property type="project" value="InterPro"/>
</dbReference>
<dbReference type="CDD" id="cd06170">
    <property type="entry name" value="LuxR_C_like"/>
    <property type="match status" value="1"/>
</dbReference>
<dbReference type="Gene3D" id="1.10.10.10">
    <property type="entry name" value="Winged helix-like DNA-binding domain superfamily/Winged helix DNA-binding domain"/>
    <property type="match status" value="1"/>
</dbReference>
<dbReference type="InterPro" id="IPR016032">
    <property type="entry name" value="Sig_transdc_resp-reg_C-effctor"/>
</dbReference>
<dbReference type="InterPro" id="IPR000792">
    <property type="entry name" value="Tscrpt_reg_LuxR_C"/>
</dbReference>
<dbReference type="InterPro" id="IPR036388">
    <property type="entry name" value="WH-like_DNA-bd_sf"/>
</dbReference>
<dbReference type="PANTHER" id="PTHR44688">
    <property type="entry name" value="DNA-BINDING TRANSCRIPTIONAL ACTIVATOR DEVR_DOSR"/>
    <property type="match status" value="1"/>
</dbReference>
<dbReference type="PANTHER" id="PTHR44688:SF16">
    <property type="entry name" value="DNA-BINDING TRANSCRIPTIONAL ACTIVATOR DEVR_DOSR"/>
    <property type="match status" value="1"/>
</dbReference>
<dbReference type="Pfam" id="PF00196">
    <property type="entry name" value="GerE"/>
    <property type="match status" value="1"/>
</dbReference>
<dbReference type="PRINTS" id="PR00038">
    <property type="entry name" value="HTHLUXR"/>
</dbReference>
<dbReference type="SMART" id="SM00421">
    <property type="entry name" value="HTH_LUXR"/>
    <property type="match status" value="1"/>
</dbReference>
<dbReference type="SUPFAM" id="SSF46894">
    <property type="entry name" value="C-terminal effector domain of the bipartite response regulators"/>
    <property type="match status" value="1"/>
</dbReference>
<dbReference type="PROSITE" id="PS00622">
    <property type="entry name" value="HTH_LUXR_1"/>
    <property type="match status" value="1"/>
</dbReference>
<dbReference type="PROSITE" id="PS50043">
    <property type="entry name" value="HTH_LUXR_2"/>
    <property type="match status" value="1"/>
</dbReference>
<proteinExistence type="predicted"/>
<protein>
    <recommendedName>
        <fullName>Monoamine regulon transcriptional regulator</fullName>
    </recommendedName>
</protein>
<sequence length="227" mass="26238">MSALLKASRNDAIIARCLQTISQLIPLTSAVFYRVNNRLKPENYILHNISDNTHQQYLENFQPLDPLLPSHFSHQNTTVAAMTPRLCDRNRHYYHEFMLPNNVRDMTEIFIRRERRIVAGISLMRDVPFSSEERQRAQAVLPLVELAIRDCLQEEDDLPAILTAKEREIVGMVREGASNKLIARQLDISLSTVKTHLRNIFAKTEVVNRTELVSRTWMPAAQRTLHL</sequence>
<accession>P54794</accession>
<comment type="function">
    <text>Positive regulatory protein for the induction of arylsulfatase synthesis (maoA), tyramine oxidase (tynA), maoC, maoE/F operon, and atsB/A operon which are all regulated by monoamines, and included under the common term of monoamine regulon.</text>
</comment>
<reference key="1">
    <citation type="journal article" date="1993" name="J. Bacteriol.">
        <title>moaR, a gene that encodes a positive regulator of the monoamine regulon in Klebsiella aerogenes.</title>
        <authorList>
            <person name="Azakami H."/>
            <person name="Sugino H."/>
            <person name="Yokoro N."/>
            <person name="Iwata N."/>
            <person name="Murooka Y."/>
        </authorList>
    </citation>
    <scope>NUCLEOTIDE SEQUENCE [GENOMIC DNA]</scope>
    <source>
        <strain>W70</strain>
    </source>
</reference>
<evidence type="ECO:0000255" key="1">
    <source>
        <dbReference type="PROSITE-ProRule" id="PRU00411"/>
    </source>
</evidence>